<proteinExistence type="inferred from homology"/>
<dbReference type="EMBL" id="FM200053">
    <property type="protein sequence ID" value="CAR58421.1"/>
    <property type="molecule type" value="Genomic_DNA"/>
</dbReference>
<dbReference type="RefSeq" id="WP_001241346.1">
    <property type="nucleotide sequence ID" value="NC_011147.1"/>
</dbReference>
<dbReference type="SMR" id="B5BAW5"/>
<dbReference type="KEGG" id="sek:SSPA0304"/>
<dbReference type="HOGENOM" id="CLU_107144_0_0_6"/>
<dbReference type="Proteomes" id="UP000001869">
    <property type="component" value="Chromosome"/>
</dbReference>
<dbReference type="GO" id="GO:0005829">
    <property type="term" value="C:cytosol"/>
    <property type="evidence" value="ECO:0007669"/>
    <property type="project" value="TreeGrafter"/>
</dbReference>
<dbReference type="GO" id="GO:0051537">
    <property type="term" value="F:2 iron, 2 sulfur cluster binding"/>
    <property type="evidence" value="ECO:0007669"/>
    <property type="project" value="UniProtKB-KW"/>
</dbReference>
<dbReference type="GO" id="GO:0003700">
    <property type="term" value="F:DNA-binding transcription factor activity"/>
    <property type="evidence" value="ECO:0007669"/>
    <property type="project" value="UniProtKB-UniRule"/>
</dbReference>
<dbReference type="GO" id="GO:0003690">
    <property type="term" value="F:double-stranded DNA binding"/>
    <property type="evidence" value="ECO:0007669"/>
    <property type="project" value="UniProtKB-UniRule"/>
</dbReference>
<dbReference type="GO" id="GO:0005506">
    <property type="term" value="F:iron ion binding"/>
    <property type="evidence" value="ECO:0007669"/>
    <property type="project" value="UniProtKB-UniRule"/>
</dbReference>
<dbReference type="FunFam" id="1.10.10.10:FF:000026">
    <property type="entry name" value="HTH-type transcriptional regulator IscR"/>
    <property type="match status" value="1"/>
</dbReference>
<dbReference type="Gene3D" id="1.10.10.10">
    <property type="entry name" value="Winged helix-like DNA-binding domain superfamily/Winged helix DNA-binding domain"/>
    <property type="match status" value="1"/>
</dbReference>
<dbReference type="HAMAP" id="MF_01176">
    <property type="entry name" value="HTH_type_IscR"/>
    <property type="match status" value="1"/>
</dbReference>
<dbReference type="InterPro" id="IPR010242">
    <property type="entry name" value="TF_HTH_IscR"/>
</dbReference>
<dbReference type="InterPro" id="IPR030489">
    <property type="entry name" value="TR_Rrf2-type_CS"/>
</dbReference>
<dbReference type="InterPro" id="IPR000944">
    <property type="entry name" value="Tscrpt_reg_Rrf2"/>
</dbReference>
<dbReference type="InterPro" id="IPR036388">
    <property type="entry name" value="WH-like_DNA-bd_sf"/>
</dbReference>
<dbReference type="InterPro" id="IPR036390">
    <property type="entry name" value="WH_DNA-bd_sf"/>
</dbReference>
<dbReference type="NCBIfam" id="TIGR02010">
    <property type="entry name" value="IscR"/>
    <property type="match status" value="1"/>
</dbReference>
<dbReference type="NCBIfam" id="NF008110">
    <property type="entry name" value="PRK10857.1"/>
    <property type="match status" value="1"/>
</dbReference>
<dbReference type="NCBIfam" id="TIGR00738">
    <property type="entry name" value="rrf2_super"/>
    <property type="match status" value="1"/>
</dbReference>
<dbReference type="PANTHER" id="PTHR33221:SF5">
    <property type="entry name" value="HTH-TYPE TRANSCRIPTIONAL REGULATOR ISCR"/>
    <property type="match status" value="1"/>
</dbReference>
<dbReference type="PANTHER" id="PTHR33221">
    <property type="entry name" value="WINGED HELIX-TURN-HELIX TRANSCRIPTIONAL REGULATOR, RRF2 FAMILY"/>
    <property type="match status" value="1"/>
</dbReference>
<dbReference type="Pfam" id="PF02082">
    <property type="entry name" value="Rrf2"/>
    <property type="match status" value="1"/>
</dbReference>
<dbReference type="SUPFAM" id="SSF46785">
    <property type="entry name" value="Winged helix' DNA-binding domain"/>
    <property type="match status" value="1"/>
</dbReference>
<dbReference type="PROSITE" id="PS01332">
    <property type="entry name" value="HTH_RRF2_1"/>
    <property type="match status" value="1"/>
</dbReference>
<dbReference type="PROSITE" id="PS51197">
    <property type="entry name" value="HTH_RRF2_2"/>
    <property type="match status" value="1"/>
</dbReference>
<feature type="chain" id="PRO_1000138110" description="HTH-type transcriptional regulator IscR">
    <location>
        <begin position="1"/>
        <end position="164"/>
    </location>
</feature>
<feature type="domain" description="HTH rrf2-type" evidence="1">
    <location>
        <begin position="2"/>
        <end position="131"/>
    </location>
</feature>
<feature type="DNA-binding region" description="H-T-H motif" evidence="1">
    <location>
        <begin position="28"/>
        <end position="51"/>
    </location>
</feature>
<feature type="binding site" evidence="1">
    <location>
        <position position="92"/>
    </location>
    <ligand>
        <name>[2Fe-2S] cluster</name>
        <dbReference type="ChEBI" id="CHEBI:190135"/>
    </ligand>
</feature>
<feature type="binding site" evidence="1">
    <location>
        <position position="98"/>
    </location>
    <ligand>
        <name>[2Fe-2S] cluster</name>
        <dbReference type="ChEBI" id="CHEBI:190135"/>
    </ligand>
</feature>
<feature type="binding site" evidence="1">
    <location>
        <position position="104"/>
    </location>
    <ligand>
        <name>[2Fe-2S] cluster</name>
        <dbReference type="ChEBI" id="CHEBI:190135"/>
    </ligand>
</feature>
<evidence type="ECO:0000255" key="1">
    <source>
        <dbReference type="HAMAP-Rule" id="MF_01176"/>
    </source>
</evidence>
<gene>
    <name evidence="1" type="primary">iscR</name>
    <name type="ordered locus">SSPA0304</name>
</gene>
<keyword id="KW-0001">2Fe-2S</keyword>
<keyword id="KW-0010">Activator</keyword>
<keyword id="KW-0238">DNA-binding</keyword>
<keyword id="KW-0408">Iron</keyword>
<keyword id="KW-0411">Iron-sulfur</keyword>
<keyword id="KW-0479">Metal-binding</keyword>
<keyword id="KW-0678">Repressor</keyword>
<keyword id="KW-0804">Transcription</keyword>
<keyword id="KW-0805">Transcription regulation</keyword>
<protein>
    <recommendedName>
        <fullName evidence="1">HTH-type transcriptional regulator IscR</fullName>
    </recommendedName>
</protein>
<accession>B5BAW5</accession>
<reference key="1">
    <citation type="journal article" date="2009" name="BMC Genomics">
        <title>Pseudogene accumulation in the evolutionary histories of Salmonella enterica serovars Paratyphi A and Typhi.</title>
        <authorList>
            <person name="Holt K.E."/>
            <person name="Thomson N.R."/>
            <person name="Wain J."/>
            <person name="Langridge G.C."/>
            <person name="Hasan R."/>
            <person name="Bhutta Z.A."/>
            <person name="Quail M.A."/>
            <person name="Norbertczak H."/>
            <person name="Walker D."/>
            <person name="Simmonds M."/>
            <person name="White B."/>
            <person name="Bason N."/>
            <person name="Mungall K."/>
            <person name="Dougan G."/>
            <person name="Parkhill J."/>
        </authorList>
    </citation>
    <scope>NUCLEOTIDE SEQUENCE [LARGE SCALE GENOMIC DNA]</scope>
    <source>
        <strain>AKU_12601</strain>
    </source>
</reference>
<name>ISCR_SALPK</name>
<sequence length="164" mass="17391">MRLTSKGRYAVTAMLDVALNSEAGPVPLADISERQGISLSYLEQLFSRLRKNGLVSSVRGPGGGYLLGKDAGSIAVGEVISAVDESVDATRCQGKGGCQGGDKCLTHALWRDLSDRLTGFLNNITLGELVNNQEVLDVSGRQHTHDAPRASGRAQDAIDVKLRA</sequence>
<comment type="function">
    <text evidence="1">Regulates the transcription of several operons and genes involved in the biogenesis of Fe-S clusters and Fe-S-containing proteins.</text>
</comment>
<comment type="cofactor">
    <cofactor evidence="1">
        <name>[2Fe-2S] cluster</name>
        <dbReference type="ChEBI" id="CHEBI:190135"/>
    </cofactor>
    <text evidence="1">Binds 1 [2Fe-2S] cluster.</text>
</comment>
<organism>
    <name type="scientific">Salmonella paratyphi A (strain AKU_12601)</name>
    <dbReference type="NCBI Taxonomy" id="554290"/>
    <lineage>
        <taxon>Bacteria</taxon>
        <taxon>Pseudomonadati</taxon>
        <taxon>Pseudomonadota</taxon>
        <taxon>Gammaproteobacteria</taxon>
        <taxon>Enterobacterales</taxon>
        <taxon>Enterobacteriaceae</taxon>
        <taxon>Salmonella</taxon>
    </lineage>
</organism>